<accession>B9JC94</accession>
<comment type="function">
    <text evidence="1">Catalyzes the formation of phosphatidylethanolamine (PtdEtn) from phosphatidylserine (PtdSer).</text>
</comment>
<comment type="catalytic activity">
    <reaction evidence="1">
        <text>a 1,2-diacyl-sn-glycero-3-phospho-L-serine + H(+) = a 1,2-diacyl-sn-glycero-3-phosphoethanolamine + CO2</text>
        <dbReference type="Rhea" id="RHEA:20828"/>
        <dbReference type="ChEBI" id="CHEBI:15378"/>
        <dbReference type="ChEBI" id="CHEBI:16526"/>
        <dbReference type="ChEBI" id="CHEBI:57262"/>
        <dbReference type="ChEBI" id="CHEBI:64612"/>
        <dbReference type="EC" id="4.1.1.65"/>
    </reaction>
</comment>
<comment type="cofactor">
    <cofactor evidence="1">
        <name>pyruvate</name>
        <dbReference type="ChEBI" id="CHEBI:15361"/>
    </cofactor>
    <text evidence="1">Binds 1 pyruvoyl group covalently per subunit.</text>
</comment>
<comment type="pathway">
    <text evidence="1">Phospholipid metabolism; phosphatidylethanolamine biosynthesis; phosphatidylethanolamine from CDP-diacylglycerol: step 2/2.</text>
</comment>
<comment type="subunit">
    <text evidence="1">Heterodimer of a large membrane-associated beta subunit and a small pyruvoyl-containing alpha subunit.</text>
</comment>
<comment type="subcellular location">
    <subcellularLocation>
        <location evidence="1">Cell membrane</location>
        <topology evidence="1">Peripheral membrane protein</topology>
    </subcellularLocation>
</comment>
<comment type="PTM">
    <text evidence="1">Is synthesized initially as an inactive proenzyme. Formation of the active enzyme involves a self-maturation process in which the active site pyruvoyl group is generated from an internal serine residue via an autocatalytic post-translational modification. Two non-identical subunits are generated from the proenzyme in this reaction, and the pyruvate is formed at the N-terminus of the alpha chain, which is derived from the carboxyl end of the proenzyme. The post-translation cleavage follows an unusual pathway, termed non-hydrolytic serinolysis, in which the side chain hydroxyl group of the serine supplies its oxygen atom to form the C-terminus of the beta chain, while the remainder of the serine residue undergoes an oxidative deamination to produce ammonia and the pyruvoyl prosthetic group on the alpha chain.</text>
</comment>
<comment type="similarity">
    <text evidence="1">Belongs to the phosphatidylserine decarboxylase family. PSD-A subfamily.</text>
</comment>
<name>PSD_RHIR8</name>
<keyword id="KW-1003">Cell membrane</keyword>
<keyword id="KW-0210">Decarboxylase</keyword>
<keyword id="KW-0444">Lipid biosynthesis</keyword>
<keyword id="KW-0443">Lipid metabolism</keyword>
<keyword id="KW-0456">Lyase</keyword>
<keyword id="KW-0472">Membrane</keyword>
<keyword id="KW-0594">Phospholipid biosynthesis</keyword>
<keyword id="KW-1208">Phospholipid metabolism</keyword>
<keyword id="KW-0670">Pyruvate</keyword>
<keyword id="KW-0865">Zymogen</keyword>
<reference key="1">
    <citation type="journal article" date="2009" name="J. Bacteriol.">
        <title>Genome sequences of three Agrobacterium biovars help elucidate the evolution of multichromosome genomes in bacteria.</title>
        <authorList>
            <person name="Slater S.C."/>
            <person name="Goldman B.S."/>
            <person name="Goodner B."/>
            <person name="Setubal J.C."/>
            <person name="Farrand S.K."/>
            <person name="Nester E.W."/>
            <person name="Burr T.J."/>
            <person name="Banta L."/>
            <person name="Dickerman A.W."/>
            <person name="Paulsen I."/>
            <person name="Otten L."/>
            <person name="Suen G."/>
            <person name="Welch R."/>
            <person name="Almeida N.F."/>
            <person name="Arnold F."/>
            <person name="Burton O.T."/>
            <person name="Du Z."/>
            <person name="Ewing A."/>
            <person name="Godsy E."/>
            <person name="Heisel S."/>
            <person name="Houmiel K.L."/>
            <person name="Jhaveri J."/>
            <person name="Lu J."/>
            <person name="Miller N.M."/>
            <person name="Norton S."/>
            <person name="Chen Q."/>
            <person name="Phoolcharoen W."/>
            <person name="Ohlin V."/>
            <person name="Ondrusek D."/>
            <person name="Pride N."/>
            <person name="Stricklin S.L."/>
            <person name="Sun J."/>
            <person name="Wheeler C."/>
            <person name="Wilson L."/>
            <person name="Zhu H."/>
            <person name="Wood D.W."/>
        </authorList>
    </citation>
    <scope>NUCLEOTIDE SEQUENCE [LARGE SCALE GENOMIC DNA]</scope>
    <source>
        <strain>K84 / ATCC BAA-868</strain>
    </source>
</reference>
<organism>
    <name type="scientific">Rhizobium rhizogenes (strain K84 / ATCC BAA-868)</name>
    <name type="common">Agrobacterium radiobacter</name>
    <dbReference type="NCBI Taxonomy" id="311403"/>
    <lineage>
        <taxon>Bacteria</taxon>
        <taxon>Pseudomonadati</taxon>
        <taxon>Pseudomonadota</taxon>
        <taxon>Alphaproteobacteria</taxon>
        <taxon>Hyphomicrobiales</taxon>
        <taxon>Rhizobiaceae</taxon>
        <taxon>Rhizobium/Agrobacterium group</taxon>
        <taxon>Rhizobium</taxon>
    </lineage>
</organism>
<evidence type="ECO:0000255" key="1">
    <source>
        <dbReference type="HAMAP-Rule" id="MF_00664"/>
    </source>
</evidence>
<sequence>MSLLNSVRNVIVPVHKEGYPFVAGFFVASLVLGWVFKPLFWIGLILTLWCAYFFRDPERMTAQDDDLAISPADGKVSGVQMVTPPAELNLGTEPMLRVSIFMNVFDCHVNRSPMRGRITNIAYRQGSFLNAELDKASEQNERNGLVIETKHGEIGVVQIAGLVARRILCFVNVNEPLDAGERIGLIRFGSRLDVFFPAGAEPRVAVGQRAIAGETIIAEFGSPKGPTVSRRS</sequence>
<dbReference type="EC" id="4.1.1.65" evidence="1"/>
<dbReference type="EMBL" id="CP000628">
    <property type="protein sequence ID" value="ACM26015.1"/>
    <property type="molecule type" value="Genomic_DNA"/>
</dbReference>
<dbReference type="RefSeq" id="WP_007693046.1">
    <property type="nucleotide sequence ID" value="NC_011985.1"/>
</dbReference>
<dbReference type="STRING" id="311403.Arad_1622"/>
<dbReference type="KEGG" id="ara:Arad_1622"/>
<dbReference type="eggNOG" id="COG0688">
    <property type="taxonomic scope" value="Bacteria"/>
</dbReference>
<dbReference type="HOGENOM" id="CLU_072492_0_0_5"/>
<dbReference type="UniPathway" id="UPA00558">
    <property type="reaction ID" value="UER00616"/>
</dbReference>
<dbReference type="Proteomes" id="UP000001600">
    <property type="component" value="Chromosome 1"/>
</dbReference>
<dbReference type="GO" id="GO:0005886">
    <property type="term" value="C:plasma membrane"/>
    <property type="evidence" value="ECO:0007669"/>
    <property type="project" value="UniProtKB-SubCell"/>
</dbReference>
<dbReference type="GO" id="GO:0004609">
    <property type="term" value="F:phosphatidylserine decarboxylase activity"/>
    <property type="evidence" value="ECO:0007669"/>
    <property type="project" value="UniProtKB-UniRule"/>
</dbReference>
<dbReference type="GO" id="GO:0006646">
    <property type="term" value="P:phosphatidylethanolamine biosynthetic process"/>
    <property type="evidence" value="ECO:0007669"/>
    <property type="project" value="UniProtKB-UniRule"/>
</dbReference>
<dbReference type="HAMAP" id="MF_00664">
    <property type="entry name" value="PS_decarb_PSD_A"/>
    <property type="match status" value="1"/>
</dbReference>
<dbReference type="InterPro" id="IPR003817">
    <property type="entry name" value="PS_Dcarbxylase"/>
</dbReference>
<dbReference type="InterPro" id="IPR033175">
    <property type="entry name" value="PSD-A"/>
</dbReference>
<dbReference type="NCBIfam" id="NF003677">
    <property type="entry name" value="PRK05305.1-1"/>
    <property type="match status" value="1"/>
</dbReference>
<dbReference type="NCBIfam" id="NF003678">
    <property type="entry name" value="PRK05305.1-2"/>
    <property type="match status" value="1"/>
</dbReference>
<dbReference type="NCBIfam" id="NF003679">
    <property type="entry name" value="PRK05305.1-3"/>
    <property type="match status" value="1"/>
</dbReference>
<dbReference type="NCBIfam" id="NF003685">
    <property type="entry name" value="PRK05305.2-5"/>
    <property type="match status" value="1"/>
</dbReference>
<dbReference type="PANTHER" id="PTHR35809">
    <property type="entry name" value="ARCHAETIDYLSERINE DECARBOXYLASE PROENZYME-RELATED"/>
    <property type="match status" value="1"/>
</dbReference>
<dbReference type="PANTHER" id="PTHR35809:SF1">
    <property type="entry name" value="ARCHAETIDYLSERINE DECARBOXYLASE PROENZYME-RELATED"/>
    <property type="match status" value="1"/>
</dbReference>
<dbReference type="Pfam" id="PF02666">
    <property type="entry name" value="PS_Dcarbxylase"/>
    <property type="match status" value="1"/>
</dbReference>
<feature type="chain" id="PRO_1000147623" description="Phosphatidylserine decarboxylase beta chain" evidence="1">
    <location>
        <begin position="1"/>
        <end position="189"/>
    </location>
</feature>
<feature type="chain" id="PRO_1000147624" description="Phosphatidylserine decarboxylase alpha chain" evidence="1">
    <location>
        <begin position="190"/>
        <end position="232"/>
    </location>
</feature>
<feature type="active site" description="Schiff-base intermediate with substrate; via pyruvic acid" evidence="1">
    <location>
        <position position="190"/>
    </location>
</feature>
<feature type="site" description="Cleavage (non-hydrolytic); by autocatalysis" evidence="1">
    <location>
        <begin position="189"/>
        <end position="190"/>
    </location>
</feature>
<feature type="modified residue" description="Pyruvic acid (Ser); by autocatalysis" evidence="1">
    <location>
        <position position="190"/>
    </location>
</feature>
<proteinExistence type="inferred from homology"/>
<protein>
    <recommendedName>
        <fullName evidence="1">Phosphatidylserine decarboxylase proenzyme</fullName>
        <ecNumber evidence="1">4.1.1.65</ecNumber>
    </recommendedName>
    <component>
        <recommendedName>
            <fullName evidence="1">Phosphatidylserine decarboxylase alpha chain</fullName>
        </recommendedName>
    </component>
    <component>
        <recommendedName>
            <fullName evidence="1">Phosphatidylserine decarboxylase beta chain</fullName>
        </recommendedName>
    </component>
</protein>
<gene>
    <name evidence="1" type="primary">psd</name>
    <name type="ordered locus">Arad_1622</name>
</gene>